<keyword id="KW-0687">Ribonucleoprotein</keyword>
<keyword id="KW-0689">Ribosomal protein</keyword>
<keyword id="KW-0694">RNA-binding</keyword>
<keyword id="KW-0699">rRNA-binding</keyword>
<proteinExistence type="inferred from homology"/>
<dbReference type="EMBL" id="CP000915">
    <property type="protein sequence ID" value="ACD31333.1"/>
    <property type="molecule type" value="Genomic_DNA"/>
</dbReference>
<dbReference type="SMR" id="B2SDW9"/>
<dbReference type="KEGG" id="ftm:FTM_1511"/>
<dbReference type="HOGENOM" id="CLU_098841_0_1_6"/>
<dbReference type="GO" id="GO:0022625">
    <property type="term" value="C:cytosolic large ribosomal subunit"/>
    <property type="evidence" value="ECO:0007669"/>
    <property type="project" value="TreeGrafter"/>
</dbReference>
<dbReference type="GO" id="GO:0008097">
    <property type="term" value="F:5S rRNA binding"/>
    <property type="evidence" value="ECO:0007669"/>
    <property type="project" value="TreeGrafter"/>
</dbReference>
<dbReference type="GO" id="GO:0003735">
    <property type="term" value="F:structural constituent of ribosome"/>
    <property type="evidence" value="ECO:0007669"/>
    <property type="project" value="InterPro"/>
</dbReference>
<dbReference type="GO" id="GO:0006412">
    <property type="term" value="P:translation"/>
    <property type="evidence" value="ECO:0007669"/>
    <property type="project" value="UniProtKB-UniRule"/>
</dbReference>
<dbReference type="CDD" id="cd00432">
    <property type="entry name" value="Ribosomal_L18_L5e"/>
    <property type="match status" value="1"/>
</dbReference>
<dbReference type="FunFam" id="3.30.420.100:FF:000001">
    <property type="entry name" value="50S ribosomal protein L18"/>
    <property type="match status" value="1"/>
</dbReference>
<dbReference type="Gene3D" id="3.30.420.100">
    <property type="match status" value="1"/>
</dbReference>
<dbReference type="HAMAP" id="MF_01337_B">
    <property type="entry name" value="Ribosomal_uL18_B"/>
    <property type="match status" value="1"/>
</dbReference>
<dbReference type="InterPro" id="IPR004389">
    <property type="entry name" value="Ribosomal_uL18_bac-type"/>
</dbReference>
<dbReference type="InterPro" id="IPR005484">
    <property type="entry name" value="Ribosomal_uL18_bac/euk"/>
</dbReference>
<dbReference type="NCBIfam" id="TIGR00060">
    <property type="entry name" value="L18_bact"/>
    <property type="match status" value="1"/>
</dbReference>
<dbReference type="PANTHER" id="PTHR12899">
    <property type="entry name" value="39S RIBOSOMAL PROTEIN L18, MITOCHONDRIAL"/>
    <property type="match status" value="1"/>
</dbReference>
<dbReference type="PANTHER" id="PTHR12899:SF3">
    <property type="entry name" value="LARGE RIBOSOMAL SUBUNIT PROTEIN UL18M"/>
    <property type="match status" value="1"/>
</dbReference>
<dbReference type="Pfam" id="PF00861">
    <property type="entry name" value="Ribosomal_L18p"/>
    <property type="match status" value="1"/>
</dbReference>
<dbReference type="SUPFAM" id="SSF53137">
    <property type="entry name" value="Translational machinery components"/>
    <property type="match status" value="1"/>
</dbReference>
<sequence length="117" mass="13036">MDKKTARLSRSKRTRIKLRELGHTRLCVYRTPRHVYAQVISGDGSTVLVAASTVEKDVKAKCKYTGNVESAAIVGEIIADRCKEKGISQVAFDRSGYKYHGRVKALVEAAREHGLQF</sequence>
<gene>
    <name evidence="1" type="primary">rplR</name>
    <name type="ordered locus">FTM_1511</name>
</gene>
<comment type="function">
    <text evidence="1">This is one of the proteins that bind and probably mediate the attachment of the 5S RNA into the large ribosomal subunit, where it forms part of the central protuberance.</text>
</comment>
<comment type="subunit">
    <text evidence="1">Part of the 50S ribosomal subunit; part of the 5S rRNA/L5/L18/L25 subcomplex. Contacts the 5S and 23S rRNAs.</text>
</comment>
<comment type="similarity">
    <text evidence="1">Belongs to the universal ribosomal protein uL18 family.</text>
</comment>
<protein>
    <recommendedName>
        <fullName evidence="1">Large ribosomal subunit protein uL18</fullName>
    </recommendedName>
    <alternativeName>
        <fullName evidence="2">50S ribosomal protein L18</fullName>
    </alternativeName>
</protein>
<evidence type="ECO:0000255" key="1">
    <source>
        <dbReference type="HAMAP-Rule" id="MF_01337"/>
    </source>
</evidence>
<evidence type="ECO:0000305" key="2"/>
<organism>
    <name type="scientific">Francisella tularensis subsp. mediasiatica (strain FSC147)</name>
    <dbReference type="NCBI Taxonomy" id="441952"/>
    <lineage>
        <taxon>Bacteria</taxon>
        <taxon>Pseudomonadati</taxon>
        <taxon>Pseudomonadota</taxon>
        <taxon>Gammaproteobacteria</taxon>
        <taxon>Thiotrichales</taxon>
        <taxon>Francisellaceae</taxon>
        <taxon>Francisella</taxon>
    </lineage>
</organism>
<name>RL18_FRATM</name>
<feature type="chain" id="PRO_1000142669" description="Large ribosomal subunit protein uL18">
    <location>
        <begin position="1"/>
        <end position="117"/>
    </location>
</feature>
<accession>B2SDW9</accession>
<reference key="1">
    <citation type="journal article" date="2009" name="PLoS Pathog.">
        <title>Molecular evolutionary consequences of niche restriction in Francisella tularensis, a facultative intracellular pathogen.</title>
        <authorList>
            <person name="Larsson P."/>
            <person name="Elfsmark D."/>
            <person name="Svensson K."/>
            <person name="Wikstroem P."/>
            <person name="Forsman M."/>
            <person name="Brettin T."/>
            <person name="Keim P."/>
            <person name="Johansson A."/>
        </authorList>
    </citation>
    <scope>NUCLEOTIDE SEQUENCE [LARGE SCALE GENOMIC DNA]</scope>
    <source>
        <strain>FSC147</strain>
    </source>
</reference>